<proteinExistence type="evidence at protein level"/>
<keyword id="KW-0002">3D-structure</keyword>
<keyword id="KW-0025">Alternative splicing</keyword>
<keyword id="KW-0067">ATP-binding</keyword>
<keyword id="KW-0160">Chromosomal rearrangement</keyword>
<keyword id="KW-0945">Host-virus interaction</keyword>
<keyword id="KW-1017">Isopeptide bond</keyword>
<keyword id="KW-0418">Kinase</keyword>
<keyword id="KW-0507">mRNA processing</keyword>
<keyword id="KW-0508">mRNA splicing</keyword>
<keyword id="KW-0547">Nucleotide-binding</keyword>
<keyword id="KW-0539">Nucleus</keyword>
<keyword id="KW-0597">Phosphoprotein</keyword>
<keyword id="KW-1267">Proteomics identification</keyword>
<keyword id="KW-1185">Reference proteome</keyword>
<keyword id="KW-0723">Serine/threonine-protein kinase</keyword>
<keyword id="KW-0808">Transferase</keyword>
<keyword id="KW-0832">Ubl conjugation</keyword>
<name>CDK12_HUMAN</name>
<dbReference type="EC" id="2.7.11.22"/>
<dbReference type="EC" id="2.7.11.23" evidence="18"/>
<dbReference type="EMBL" id="AF227198">
    <property type="protein sequence ID" value="AAF36401.1"/>
    <property type="molecule type" value="mRNA"/>
</dbReference>
<dbReference type="EMBL" id="AB020711">
    <property type="protein sequence ID" value="BAA74927.2"/>
    <property type="status" value="ALT_INIT"/>
    <property type="molecule type" value="mRNA"/>
</dbReference>
<dbReference type="EMBL" id="AK302645">
    <property type="protein sequence ID" value="BAG63886.1"/>
    <property type="molecule type" value="mRNA"/>
</dbReference>
<dbReference type="EMBL" id="AC009283">
    <property type="status" value="NOT_ANNOTATED_CDS"/>
    <property type="molecule type" value="Genomic_DNA"/>
</dbReference>
<dbReference type="EMBL" id="CH471152">
    <property type="protein sequence ID" value="EAW60577.1"/>
    <property type="molecule type" value="Genomic_DNA"/>
</dbReference>
<dbReference type="EMBL" id="BC140854">
    <property type="protein sequence ID" value="AAI40855.1"/>
    <property type="molecule type" value="mRNA"/>
</dbReference>
<dbReference type="EMBL" id="BC150265">
    <property type="protein sequence ID" value="AAI50266.1"/>
    <property type="molecule type" value="mRNA"/>
</dbReference>
<dbReference type="CCDS" id="CCDS11337.1">
    <molecule id="Q9NYV4-1"/>
</dbReference>
<dbReference type="CCDS" id="CCDS45666.1">
    <molecule id="Q9NYV4-2"/>
</dbReference>
<dbReference type="RefSeq" id="NP_055898.1">
    <molecule id="Q9NYV4-2"/>
    <property type="nucleotide sequence ID" value="NM_015083.4"/>
</dbReference>
<dbReference type="RefSeq" id="NP_057591.2">
    <molecule id="Q9NYV4-1"/>
    <property type="nucleotide sequence ID" value="NM_016507.4"/>
</dbReference>
<dbReference type="PDB" id="4CXA">
    <property type="method" value="X-ray"/>
    <property type="resolution" value="3.15 A"/>
    <property type="chains" value="A/C=715-1052"/>
</dbReference>
<dbReference type="PDB" id="4NST">
    <property type="method" value="X-ray"/>
    <property type="resolution" value="2.20 A"/>
    <property type="chains" value="A/C=714-1063"/>
</dbReference>
<dbReference type="PDB" id="4UN0">
    <property type="method" value="X-ray"/>
    <property type="resolution" value="3.15 A"/>
    <property type="chains" value="C/D=715-1038"/>
</dbReference>
<dbReference type="PDB" id="5ACB">
    <property type="method" value="X-ray"/>
    <property type="resolution" value="2.70 A"/>
    <property type="chains" value="C/D=715-1052"/>
</dbReference>
<dbReference type="PDB" id="6B3E">
    <property type="method" value="X-ray"/>
    <property type="resolution" value="3.06 A"/>
    <property type="chains" value="A/C=717-1036"/>
</dbReference>
<dbReference type="PDB" id="6CKX">
    <property type="method" value="X-ray"/>
    <property type="resolution" value="2.80 A"/>
    <property type="chains" value="A/C=714-1063"/>
</dbReference>
<dbReference type="PDB" id="6TD3">
    <property type="method" value="X-ray"/>
    <property type="resolution" value="3.46 A"/>
    <property type="chains" value="B/E/H=712-1051"/>
</dbReference>
<dbReference type="PDB" id="7NXK">
    <property type="method" value="X-ray"/>
    <property type="resolution" value="3.00 A"/>
    <property type="chains" value="A/C=714-1063"/>
</dbReference>
<dbReference type="PDB" id="8BU1">
    <property type="method" value="X-ray"/>
    <property type="resolution" value="2.98 A"/>
    <property type="chains" value="B/E/H=712-1051"/>
</dbReference>
<dbReference type="PDB" id="8BU2">
    <property type="method" value="X-ray"/>
    <property type="resolution" value="3.13 A"/>
    <property type="chains" value="B/E/H=712-1051"/>
</dbReference>
<dbReference type="PDB" id="8BU3">
    <property type="method" value="X-ray"/>
    <property type="resolution" value="3.42 A"/>
    <property type="chains" value="B/E/H=712-1051"/>
</dbReference>
<dbReference type="PDB" id="8BU4">
    <property type="method" value="X-ray"/>
    <property type="resolution" value="3.09 A"/>
    <property type="chains" value="B/E/H=712-1051"/>
</dbReference>
<dbReference type="PDB" id="8BU5">
    <property type="method" value="X-ray"/>
    <property type="resolution" value="3.13 A"/>
    <property type="chains" value="B/E/H=712-1051"/>
</dbReference>
<dbReference type="PDB" id="8BU6">
    <property type="method" value="X-ray"/>
    <property type="resolution" value="3.45 A"/>
    <property type="chains" value="B/E/H=712-1051"/>
</dbReference>
<dbReference type="PDB" id="8BU7">
    <property type="method" value="X-ray"/>
    <property type="resolution" value="3.25 A"/>
    <property type="chains" value="B/E/H=712-1051"/>
</dbReference>
<dbReference type="PDB" id="8BU9">
    <property type="method" value="X-ray"/>
    <property type="resolution" value="3.51 A"/>
    <property type="chains" value="B/E/H=712-1051"/>
</dbReference>
<dbReference type="PDB" id="8BUA">
    <property type="method" value="X-ray"/>
    <property type="resolution" value="3.19 A"/>
    <property type="chains" value="B/E/H=712-1051"/>
</dbReference>
<dbReference type="PDB" id="8BUB">
    <property type="method" value="X-ray"/>
    <property type="resolution" value="3.42 A"/>
    <property type="chains" value="B/E/H=712-1051"/>
</dbReference>
<dbReference type="PDB" id="8BUC">
    <property type="method" value="X-ray"/>
    <property type="resolution" value="3.85 A"/>
    <property type="chains" value="B/E/H=712-1051"/>
</dbReference>
<dbReference type="PDB" id="8BUD">
    <property type="method" value="X-ray"/>
    <property type="resolution" value="3.20 A"/>
    <property type="chains" value="B/E/H=712-1051"/>
</dbReference>
<dbReference type="PDB" id="8BUE">
    <property type="method" value="X-ray"/>
    <property type="resolution" value="3.25 A"/>
    <property type="chains" value="B/E/H=712-1051"/>
</dbReference>
<dbReference type="PDB" id="8BUF">
    <property type="method" value="X-ray"/>
    <property type="resolution" value="3.30 A"/>
    <property type="chains" value="B/E/H=712-1051"/>
</dbReference>
<dbReference type="PDB" id="8BUG">
    <property type="method" value="X-ray"/>
    <property type="resolution" value="3.53 A"/>
    <property type="chains" value="B/E/H=712-1051"/>
</dbReference>
<dbReference type="PDB" id="8BUH">
    <property type="method" value="X-ray"/>
    <property type="resolution" value="3.79 A"/>
    <property type="chains" value="B/E/H=712-1051"/>
</dbReference>
<dbReference type="PDB" id="8BUI">
    <property type="method" value="X-ray"/>
    <property type="resolution" value="3.50 A"/>
    <property type="chains" value="B/E/H=712-1051"/>
</dbReference>
<dbReference type="PDB" id="8BUJ">
    <property type="method" value="X-ray"/>
    <property type="resolution" value="3.62 A"/>
    <property type="chains" value="B/E/H=712-1051"/>
</dbReference>
<dbReference type="PDB" id="8BUK">
    <property type="method" value="X-ray"/>
    <property type="resolution" value="3.41 A"/>
    <property type="chains" value="B/E/H=712-1051"/>
</dbReference>
<dbReference type="PDB" id="8BUL">
    <property type="method" value="X-ray"/>
    <property type="resolution" value="3.40 A"/>
    <property type="chains" value="B/E/H=712-1052"/>
</dbReference>
<dbReference type="PDB" id="8BUM">
    <property type="method" value="X-ray"/>
    <property type="resolution" value="3.36 A"/>
    <property type="chains" value="B/E/H=712-1051"/>
</dbReference>
<dbReference type="PDB" id="8BUN">
    <property type="method" value="X-ray"/>
    <property type="resolution" value="3.08 A"/>
    <property type="chains" value="B/E/H=712-1051"/>
</dbReference>
<dbReference type="PDB" id="8BUO">
    <property type="method" value="X-ray"/>
    <property type="resolution" value="3.58 A"/>
    <property type="chains" value="B/E/H=712-1051"/>
</dbReference>
<dbReference type="PDB" id="8BUP">
    <property type="method" value="X-ray"/>
    <property type="resolution" value="3.41 A"/>
    <property type="chains" value="B/E/H=712-1051"/>
</dbReference>
<dbReference type="PDB" id="8BUQ">
    <property type="method" value="X-ray"/>
    <property type="resolution" value="3.20 A"/>
    <property type="chains" value="B/E/H=712-1051"/>
</dbReference>
<dbReference type="PDB" id="8BUR">
    <property type="method" value="X-ray"/>
    <property type="resolution" value="3.64 A"/>
    <property type="chains" value="B/E/H=712-1051"/>
</dbReference>
<dbReference type="PDB" id="8BUS">
    <property type="method" value="X-ray"/>
    <property type="resolution" value="3.26 A"/>
    <property type="chains" value="B/E/H=712-1051"/>
</dbReference>
<dbReference type="PDB" id="8BUT">
    <property type="method" value="X-ray"/>
    <property type="resolution" value="3.25 A"/>
    <property type="chains" value="B/E/H=712-1051"/>
</dbReference>
<dbReference type="PDB" id="8P81">
    <property type="method" value="X-ray"/>
    <property type="resolution" value="2.68 A"/>
    <property type="chains" value="A=714-1063"/>
</dbReference>
<dbReference type="PDB" id="9FMR">
    <property type="method" value="X-ray"/>
    <property type="resolution" value="3.90 A"/>
    <property type="chains" value="B/E/H=714-1063"/>
</dbReference>
<dbReference type="PDBsum" id="4CXA"/>
<dbReference type="PDBsum" id="4NST"/>
<dbReference type="PDBsum" id="4UN0"/>
<dbReference type="PDBsum" id="5ACB"/>
<dbReference type="PDBsum" id="6B3E"/>
<dbReference type="PDBsum" id="6CKX"/>
<dbReference type="PDBsum" id="6TD3"/>
<dbReference type="PDBsum" id="7NXK"/>
<dbReference type="PDBsum" id="8BU1"/>
<dbReference type="PDBsum" id="8BU2"/>
<dbReference type="PDBsum" id="8BU3"/>
<dbReference type="PDBsum" id="8BU4"/>
<dbReference type="PDBsum" id="8BU5"/>
<dbReference type="PDBsum" id="8BU6"/>
<dbReference type="PDBsum" id="8BU7"/>
<dbReference type="PDBsum" id="8BU9"/>
<dbReference type="PDBsum" id="8BUA"/>
<dbReference type="PDBsum" id="8BUB"/>
<dbReference type="PDBsum" id="8BUC"/>
<dbReference type="PDBsum" id="8BUD"/>
<dbReference type="PDBsum" id="8BUE"/>
<dbReference type="PDBsum" id="8BUF"/>
<dbReference type="PDBsum" id="8BUG"/>
<dbReference type="PDBsum" id="8BUH"/>
<dbReference type="PDBsum" id="8BUI"/>
<dbReference type="PDBsum" id="8BUJ"/>
<dbReference type="PDBsum" id="8BUK"/>
<dbReference type="PDBsum" id="8BUL"/>
<dbReference type="PDBsum" id="8BUM"/>
<dbReference type="PDBsum" id="8BUN"/>
<dbReference type="PDBsum" id="8BUO"/>
<dbReference type="PDBsum" id="8BUP"/>
<dbReference type="PDBsum" id="8BUQ"/>
<dbReference type="PDBsum" id="8BUR"/>
<dbReference type="PDBsum" id="8BUS"/>
<dbReference type="PDBsum" id="8BUT"/>
<dbReference type="PDBsum" id="8P81"/>
<dbReference type="PDBsum" id="9FMR"/>
<dbReference type="SMR" id="Q9NYV4"/>
<dbReference type="BioGRID" id="119715">
    <property type="interactions" value="280"/>
</dbReference>
<dbReference type="ComplexPortal" id="CPX-241">
    <property type="entry name" value="Cyclin K-CDK12 complex"/>
</dbReference>
<dbReference type="CORUM" id="Q9NYV4"/>
<dbReference type="DIP" id="DIP-39768N"/>
<dbReference type="FunCoup" id="Q9NYV4">
    <property type="interactions" value="3170"/>
</dbReference>
<dbReference type="IntAct" id="Q9NYV4">
    <property type="interactions" value="94"/>
</dbReference>
<dbReference type="MINT" id="Q9NYV4"/>
<dbReference type="STRING" id="9606.ENSP00000398880"/>
<dbReference type="BindingDB" id="Q9NYV4"/>
<dbReference type="ChEMBL" id="CHEMBL3559692"/>
<dbReference type="DrugCentral" id="Q9NYV4"/>
<dbReference type="GuidetoPHARMACOLOGY" id="1965"/>
<dbReference type="CarbonylDB" id="Q9NYV4"/>
<dbReference type="GlyConnect" id="2877">
    <property type="glycosylation" value="1 O-GlcNAc glycan (2 sites)"/>
</dbReference>
<dbReference type="GlyCosmos" id="Q9NYV4">
    <property type="glycosylation" value="6 sites, 1 glycan"/>
</dbReference>
<dbReference type="GlyGen" id="Q9NYV4">
    <property type="glycosylation" value="17 sites, 2 N-linked glycans (1 site), 1 O-linked glycan (15 sites)"/>
</dbReference>
<dbReference type="iPTMnet" id="Q9NYV4"/>
<dbReference type="PhosphoSitePlus" id="Q9NYV4"/>
<dbReference type="SwissPalm" id="Q9NYV4"/>
<dbReference type="BioMuta" id="CDK12"/>
<dbReference type="DMDM" id="308153421"/>
<dbReference type="CPTAC" id="non-CPTAC-2958"/>
<dbReference type="CPTAC" id="non-CPTAC-2959"/>
<dbReference type="jPOST" id="Q9NYV4"/>
<dbReference type="MassIVE" id="Q9NYV4"/>
<dbReference type="PaxDb" id="9606-ENSP00000398880"/>
<dbReference type="PeptideAtlas" id="Q9NYV4"/>
<dbReference type="ProteomicsDB" id="83279">
    <molecule id="Q9NYV4-1"/>
</dbReference>
<dbReference type="ProteomicsDB" id="83280">
    <molecule id="Q9NYV4-2"/>
</dbReference>
<dbReference type="ProteomicsDB" id="83281">
    <molecule id="Q9NYV4-3"/>
</dbReference>
<dbReference type="Pumba" id="Q9NYV4"/>
<dbReference type="Antibodypedia" id="2096">
    <property type="antibodies" value="233 antibodies from 32 providers"/>
</dbReference>
<dbReference type="CPTC" id="Q9NYV4">
    <property type="antibodies" value="2 antibodies"/>
</dbReference>
<dbReference type="DNASU" id="51755"/>
<dbReference type="Ensembl" id="ENST00000430627.6">
    <molecule id="Q9NYV4-2"/>
    <property type="protein sequence ID" value="ENSP00000407720.2"/>
    <property type="gene ID" value="ENSG00000167258.16"/>
</dbReference>
<dbReference type="Ensembl" id="ENST00000447079.6">
    <molecule id="Q9NYV4-1"/>
    <property type="protein sequence ID" value="ENSP00000398880.4"/>
    <property type="gene ID" value="ENSG00000167258.16"/>
</dbReference>
<dbReference type="GeneID" id="51755"/>
<dbReference type="KEGG" id="hsa:51755"/>
<dbReference type="MANE-Select" id="ENST00000447079.6">
    <property type="protein sequence ID" value="ENSP00000398880.4"/>
    <property type="RefSeq nucleotide sequence ID" value="NM_016507.4"/>
    <property type="RefSeq protein sequence ID" value="NP_057591.2"/>
</dbReference>
<dbReference type="UCSC" id="uc002hrw.6">
    <molecule id="Q9NYV4-1"/>
    <property type="organism name" value="human"/>
</dbReference>
<dbReference type="AGR" id="HGNC:24224"/>
<dbReference type="CTD" id="51755"/>
<dbReference type="DisGeNET" id="51755"/>
<dbReference type="GeneCards" id="CDK12"/>
<dbReference type="HGNC" id="HGNC:24224">
    <property type="gene designation" value="CDK12"/>
</dbReference>
<dbReference type="HPA" id="ENSG00000167258">
    <property type="expression patterns" value="Low tissue specificity"/>
</dbReference>
<dbReference type="MalaCards" id="CDK12"/>
<dbReference type="MIM" id="615514">
    <property type="type" value="gene"/>
</dbReference>
<dbReference type="neXtProt" id="NX_Q9NYV4"/>
<dbReference type="OpenTargets" id="ENSG00000167258"/>
<dbReference type="PharmGKB" id="PA165431656"/>
<dbReference type="VEuPathDB" id="HostDB:ENSG00000167258"/>
<dbReference type="eggNOG" id="KOG0600">
    <property type="taxonomic scope" value="Eukaryota"/>
</dbReference>
<dbReference type="GeneTree" id="ENSGT00940000157595"/>
<dbReference type="InParanoid" id="Q9NYV4"/>
<dbReference type="OMA" id="HWGAPAQ"/>
<dbReference type="OrthoDB" id="28397at2759"/>
<dbReference type="PAN-GO" id="Q9NYV4">
    <property type="GO annotations" value="8 GO annotations based on evolutionary models"/>
</dbReference>
<dbReference type="PhylomeDB" id="Q9NYV4"/>
<dbReference type="TreeFam" id="TF101060"/>
<dbReference type="BRENDA" id="2.7.11.22">
    <property type="organism ID" value="2681"/>
</dbReference>
<dbReference type="BRENDA" id="2.7.11.23">
    <property type="organism ID" value="2681"/>
</dbReference>
<dbReference type="PathwayCommons" id="Q9NYV4"/>
<dbReference type="Reactome" id="R-HSA-6796648">
    <property type="pathway name" value="TP53 Regulates Transcription of DNA Repair Genes"/>
</dbReference>
<dbReference type="SignaLink" id="Q9NYV4"/>
<dbReference type="SIGNOR" id="Q9NYV4"/>
<dbReference type="BioGRID-ORCS" id="51755">
    <property type="hits" value="350 hits in 1217 CRISPR screens"/>
</dbReference>
<dbReference type="ChiTaRS" id="CDK12">
    <property type="organism name" value="human"/>
</dbReference>
<dbReference type="EvolutionaryTrace" id="Q9NYV4"/>
<dbReference type="GeneWiki" id="CRKRS"/>
<dbReference type="GenomeRNAi" id="51755"/>
<dbReference type="Pharos" id="Q9NYV4">
    <property type="development level" value="Tchem"/>
</dbReference>
<dbReference type="PRO" id="PR:Q9NYV4"/>
<dbReference type="Proteomes" id="UP000005640">
    <property type="component" value="Chromosome 17"/>
</dbReference>
<dbReference type="RNAct" id="Q9NYV4">
    <property type="molecule type" value="protein"/>
</dbReference>
<dbReference type="Bgee" id="ENSG00000167258">
    <property type="expression patterns" value="Expressed in buccal mucosa cell and 175 other cell types or tissues"/>
</dbReference>
<dbReference type="ExpressionAtlas" id="Q9NYV4">
    <property type="expression patterns" value="baseline and differential"/>
</dbReference>
<dbReference type="GO" id="GO:0002944">
    <property type="term" value="C:cyclin K-CDK12 complex"/>
    <property type="evidence" value="ECO:0000353"/>
    <property type="project" value="MGI"/>
</dbReference>
<dbReference type="GO" id="GO:0008024">
    <property type="term" value="C:cyclin/CDK positive transcription elongation factor complex"/>
    <property type="evidence" value="ECO:0000318"/>
    <property type="project" value="GO_Central"/>
</dbReference>
<dbReference type="GO" id="GO:0019908">
    <property type="term" value="C:nuclear cyclin-dependent protein kinase holoenzyme complex"/>
    <property type="evidence" value="ECO:0000250"/>
    <property type="project" value="UniProtKB"/>
</dbReference>
<dbReference type="GO" id="GO:0016607">
    <property type="term" value="C:nuclear speck"/>
    <property type="evidence" value="ECO:0000314"/>
    <property type="project" value="HPA"/>
</dbReference>
<dbReference type="GO" id="GO:0005654">
    <property type="term" value="C:nucleoplasm"/>
    <property type="evidence" value="ECO:0000314"/>
    <property type="project" value="HPA"/>
</dbReference>
<dbReference type="GO" id="GO:0005634">
    <property type="term" value="C:nucleus"/>
    <property type="evidence" value="ECO:0000318"/>
    <property type="project" value="GO_Central"/>
</dbReference>
<dbReference type="GO" id="GO:0005524">
    <property type="term" value="F:ATP binding"/>
    <property type="evidence" value="ECO:0007669"/>
    <property type="project" value="UniProtKB-KW"/>
</dbReference>
<dbReference type="GO" id="GO:0030332">
    <property type="term" value="F:cyclin binding"/>
    <property type="evidence" value="ECO:0000353"/>
    <property type="project" value="MGI"/>
</dbReference>
<dbReference type="GO" id="GO:0004693">
    <property type="term" value="F:cyclin-dependent protein serine/threonine kinase activity"/>
    <property type="evidence" value="ECO:0007669"/>
    <property type="project" value="UniProtKB-EC"/>
</dbReference>
<dbReference type="GO" id="GO:0004672">
    <property type="term" value="F:protein kinase activity"/>
    <property type="evidence" value="ECO:0000314"/>
    <property type="project" value="HGNC-UCL"/>
</dbReference>
<dbReference type="GO" id="GO:0019901">
    <property type="term" value="F:protein kinase binding"/>
    <property type="evidence" value="ECO:0007669"/>
    <property type="project" value="Ensembl"/>
</dbReference>
<dbReference type="GO" id="GO:0106310">
    <property type="term" value="F:protein serine kinase activity"/>
    <property type="evidence" value="ECO:0007669"/>
    <property type="project" value="RHEA"/>
</dbReference>
<dbReference type="GO" id="GO:0008353">
    <property type="term" value="F:RNA polymerase II CTD heptapeptide repeat kinase activity"/>
    <property type="evidence" value="ECO:0000314"/>
    <property type="project" value="GO_Central"/>
</dbReference>
<dbReference type="GO" id="GO:0071391">
    <property type="term" value="P:cellular response to estrogen stimulus"/>
    <property type="evidence" value="ECO:0000315"/>
    <property type="project" value="HGNC-UCL"/>
</dbReference>
<dbReference type="GO" id="GO:0006397">
    <property type="term" value="P:mRNA processing"/>
    <property type="evidence" value="ECO:0007669"/>
    <property type="project" value="UniProtKB-KW"/>
</dbReference>
<dbReference type="GO" id="GO:0033147">
    <property type="term" value="P:negative regulation of intracellular estrogen receptor signaling pathway"/>
    <property type="evidence" value="ECO:0000315"/>
    <property type="project" value="HGNC-UCL"/>
</dbReference>
<dbReference type="GO" id="GO:0043409">
    <property type="term" value="P:negative regulation of MAPK cascade"/>
    <property type="evidence" value="ECO:0000315"/>
    <property type="project" value="HGNC-UCL"/>
</dbReference>
<dbReference type="GO" id="GO:2000737">
    <property type="term" value="P:negative regulation of stem cell differentiation"/>
    <property type="evidence" value="ECO:0007669"/>
    <property type="project" value="Ensembl"/>
</dbReference>
<dbReference type="GO" id="GO:0045944">
    <property type="term" value="P:positive regulation of transcription by RNA polymerase II"/>
    <property type="evidence" value="ECO:0000315"/>
    <property type="project" value="UniProtKB"/>
</dbReference>
<dbReference type="GO" id="GO:0032968">
    <property type="term" value="P:positive regulation of transcription elongation by RNA polymerase II"/>
    <property type="evidence" value="ECO:0000314"/>
    <property type="project" value="ComplexPortal"/>
</dbReference>
<dbReference type="GO" id="GO:0043405">
    <property type="term" value="P:regulation of MAP kinase activity"/>
    <property type="evidence" value="ECO:0000315"/>
    <property type="project" value="UniProtKB"/>
</dbReference>
<dbReference type="GO" id="GO:0008380">
    <property type="term" value="P:RNA splicing"/>
    <property type="evidence" value="ECO:0000250"/>
    <property type="project" value="UniProtKB"/>
</dbReference>
<dbReference type="GO" id="GO:0006366">
    <property type="term" value="P:transcription by RNA polymerase II"/>
    <property type="evidence" value="ECO:0000314"/>
    <property type="project" value="GO_Central"/>
</dbReference>
<dbReference type="CDD" id="cd07864">
    <property type="entry name" value="STKc_CDK12"/>
    <property type="match status" value="1"/>
</dbReference>
<dbReference type="FunFam" id="1.10.510.10:FF:000102">
    <property type="entry name" value="cyclin-dependent kinase 12 isoform X1"/>
    <property type="match status" value="1"/>
</dbReference>
<dbReference type="FunFam" id="3.30.200.20:FF:000074">
    <property type="entry name" value="cyclin-dependent kinase 12 isoform X2"/>
    <property type="match status" value="1"/>
</dbReference>
<dbReference type="Gene3D" id="3.30.200.20">
    <property type="entry name" value="Phosphorylase Kinase, domain 1"/>
    <property type="match status" value="1"/>
</dbReference>
<dbReference type="Gene3D" id="1.10.510.10">
    <property type="entry name" value="Transferase(Phosphotransferase) domain 1"/>
    <property type="match status" value="1"/>
</dbReference>
<dbReference type="InterPro" id="IPR050108">
    <property type="entry name" value="CDK"/>
</dbReference>
<dbReference type="InterPro" id="IPR011009">
    <property type="entry name" value="Kinase-like_dom_sf"/>
</dbReference>
<dbReference type="InterPro" id="IPR000719">
    <property type="entry name" value="Prot_kinase_dom"/>
</dbReference>
<dbReference type="InterPro" id="IPR017441">
    <property type="entry name" value="Protein_kinase_ATP_BS"/>
</dbReference>
<dbReference type="InterPro" id="IPR008271">
    <property type="entry name" value="Ser/Thr_kinase_AS"/>
</dbReference>
<dbReference type="PANTHER" id="PTHR24056">
    <property type="entry name" value="CELL DIVISION PROTEIN KINASE"/>
    <property type="match status" value="1"/>
</dbReference>
<dbReference type="PANTHER" id="PTHR24056:SF126">
    <property type="entry name" value="CYCLIN-DEPENDENT KINASE 12"/>
    <property type="match status" value="1"/>
</dbReference>
<dbReference type="Pfam" id="PF00069">
    <property type="entry name" value="Pkinase"/>
    <property type="match status" value="1"/>
</dbReference>
<dbReference type="SMART" id="SM00220">
    <property type="entry name" value="S_TKc"/>
    <property type="match status" value="1"/>
</dbReference>
<dbReference type="SUPFAM" id="SSF56112">
    <property type="entry name" value="Protein kinase-like (PK-like)"/>
    <property type="match status" value="1"/>
</dbReference>
<dbReference type="PROSITE" id="PS00107">
    <property type="entry name" value="PROTEIN_KINASE_ATP"/>
    <property type="match status" value="1"/>
</dbReference>
<dbReference type="PROSITE" id="PS50011">
    <property type="entry name" value="PROTEIN_KINASE_DOM"/>
    <property type="match status" value="1"/>
</dbReference>
<dbReference type="PROSITE" id="PS00108">
    <property type="entry name" value="PROTEIN_KINASE_ST"/>
    <property type="match status" value="1"/>
</dbReference>
<evidence type="ECO:0000250" key="1"/>
<evidence type="ECO:0000250" key="2">
    <source>
        <dbReference type="UniProtKB" id="Q14AX6"/>
    </source>
</evidence>
<evidence type="ECO:0000250" key="3">
    <source>
        <dbReference type="UniProtKB" id="Q3MJK5"/>
    </source>
</evidence>
<evidence type="ECO:0000255" key="4">
    <source>
        <dbReference type="PROSITE-ProRule" id="PRU00159"/>
    </source>
</evidence>
<evidence type="ECO:0000255" key="5">
    <source>
        <dbReference type="PROSITE-ProRule" id="PRU10027"/>
    </source>
</evidence>
<evidence type="ECO:0000256" key="6">
    <source>
        <dbReference type="SAM" id="MobiDB-lite"/>
    </source>
</evidence>
<evidence type="ECO:0000269" key="7">
    <source>
    </source>
</evidence>
<evidence type="ECO:0000269" key="8">
    <source>
    </source>
</evidence>
<evidence type="ECO:0000269" key="9">
    <source>
    </source>
</evidence>
<evidence type="ECO:0000269" key="10">
    <source>
    </source>
</evidence>
<evidence type="ECO:0000269" key="11">
    <source>
    </source>
</evidence>
<evidence type="ECO:0000269" key="12">
    <source>
    </source>
</evidence>
<evidence type="ECO:0000269" key="13">
    <source>
    </source>
</evidence>
<evidence type="ECO:0000303" key="14">
    <source>
    </source>
</evidence>
<evidence type="ECO:0000303" key="15">
    <source>
    </source>
</evidence>
<evidence type="ECO:0000303" key="16">
    <source>
    </source>
</evidence>
<evidence type="ECO:0000305" key="17"/>
<evidence type="ECO:0000305" key="18">
    <source>
    </source>
</evidence>
<evidence type="ECO:0007744" key="19">
    <source>
    </source>
</evidence>
<evidence type="ECO:0007744" key="20">
    <source>
    </source>
</evidence>
<evidence type="ECO:0007744" key="21">
    <source>
    </source>
</evidence>
<evidence type="ECO:0007744" key="22">
    <source>
    </source>
</evidence>
<evidence type="ECO:0007744" key="23">
    <source>
    </source>
</evidence>
<evidence type="ECO:0007744" key="24">
    <source>
    </source>
</evidence>
<evidence type="ECO:0007744" key="25">
    <source>
    </source>
</evidence>
<evidence type="ECO:0007744" key="26">
    <source>
    </source>
</evidence>
<evidence type="ECO:0007744" key="27">
    <source>
    </source>
</evidence>
<evidence type="ECO:0007744" key="28">
    <source>
    </source>
</evidence>
<evidence type="ECO:0007829" key="29">
    <source>
        <dbReference type="PDB" id="4NST"/>
    </source>
</evidence>
<evidence type="ECO:0007829" key="30">
    <source>
        <dbReference type="PDB" id="8BU5"/>
    </source>
</evidence>
<evidence type="ECO:0007829" key="31">
    <source>
        <dbReference type="PDB" id="8BU7"/>
    </source>
</evidence>
<evidence type="ECO:0007829" key="32">
    <source>
        <dbReference type="PDB" id="8BUB"/>
    </source>
</evidence>
<evidence type="ECO:0007829" key="33">
    <source>
        <dbReference type="PDB" id="8BUI"/>
    </source>
</evidence>
<evidence type="ECO:0007829" key="34">
    <source>
        <dbReference type="PDB" id="8BUP"/>
    </source>
</evidence>
<evidence type="ECO:0007829" key="35">
    <source>
        <dbReference type="PDB" id="8P81"/>
    </source>
</evidence>
<sequence>MPNSERHGGKKDGSGGASGTLQPSSGGGSSNSRERHRLVSKHKRHKSKHSKDMGLVTPEAASLGTVIKPLVEYDDISSDSDTFSDDMAFKLDRRENDERRGSDRSDRLHKHRHHQHRRSRDLLKAKQTEKEKSQEVSSKSGSMKDRISGSSKRSNEETDDYGKAQVAKSSSKESRSSKLHKEKTRKERELKSGHKDRSKSHRKRETPKSYKTVDSPKRRSRSPHRKWSDSSKQDDSPSGASYGQDYDLSPSRSHTSSNYDSYKKSPGSTSRRQSVSPPYKEPSAYQSSTRSPSPYSRRQRSVSPYSRRRSSSYERSGSYSGRSPSPYGRRRSSSPFLSKRSLSRSPLPSRKSMKSRSRSPAYSRHSSSHSKKKRSSSRSRHSSISPVRLPLNSSLGAELSRKKKERAAAAAAAKMDGKESKGSPVFLPRKENSSVEAKDSGLESKKLPRSVKLEKSAPDTELVNVTHLNTEVKNSSDTGKVKLDENSEKHLVKDLKAQGTRDSKPIALKEEIVTPKETETSEKETPPPLPTIASPPPPLPTTTPPPQTPPLPPLPPIPALPQQPPLPPSQPAFSQVPASSTSTLPPSTHSKTSAVSSQANSQPPVQVSVKTQVSVTAAIPHLKTSTLPPLPLPPLLPGDDDMDSPKETLPSKPVKKEKEQRTRHLLTDLPLPPELPGGDLSPPDSPEPKAITPPQQPYKKRPKICCPRYGERRQTESDWGKRCVDKFDIIGIIGEGTYGQVYKAKDKDTGELVALKKVRLDNEKEGFPITAIREIKILRQLIHRSVVNMKEIVTDKQDALDFKKDKGAFYLVFEYMDHDLMGLLESGLVHFSEDHIKSFMKQLMEGLEYCHKKNFLHRDIKCSNILLNNSGQIKLADFGLARLYNSEESRPYTNKVITLWYRPPELLLGEERYTPAIDVWSCGCILGELFTKKPIFQANLELAQLELISRLCGSPCPAVWPDVIKLPYFNTMKPKKQYRRRLREEFSFIPSAALDLLDHMLTLDPSKRCTAEQTLQSDFLKDVELSKMAPPDLPHWQDCHELWSKKRRRQRQSGVVVEEPPPSKTSRKETTSGTSTEPVKNSSPAPPQPAPGKVESGAGDAIGLADITQQLNQSELAVLLNLLQSQTDLSIPQMAQLLNIHSNPEMQQQLEALNQSISALTEATSQQQDSETMAPEESLKEAPSAPVILPSAEQTTLEASSTPADMQNILAVLLSQLMKTQEPAGSLEENNSDKNSGPQGPRRTPTMPQEEAAACPPHILPPEKRPPEPPGPPPPPPPPPLVEGDLSSAPQELNPAVTAALLQLLSQPEAEPPGHLPHEHQALRPMEYSTRPRPNRTYGNTDGPETGFSAIDTDERNSGPALTESLVQTLVKNRTFSGSLSHLGESSSYQGTGSVQFPGDQDLRFARVPLALHPVVGQPFLKAEGSSNSVVHAETKLQNYGELGPGTTGASSSGAGLHWGGPTQSSAYGKLYRGPTRVPPRGGRGRGVPY</sequence>
<organism>
    <name type="scientific">Homo sapiens</name>
    <name type="common">Human</name>
    <dbReference type="NCBI Taxonomy" id="9606"/>
    <lineage>
        <taxon>Eukaryota</taxon>
        <taxon>Metazoa</taxon>
        <taxon>Chordata</taxon>
        <taxon>Craniata</taxon>
        <taxon>Vertebrata</taxon>
        <taxon>Euteleostomi</taxon>
        <taxon>Mammalia</taxon>
        <taxon>Eutheria</taxon>
        <taxon>Euarchontoglires</taxon>
        <taxon>Primates</taxon>
        <taxon>Haplorrhini</taxon>
        <taxon>Catarrhini</taxon>
        <taxon>Hominidae</taxon>
        <taxon>Homo</taxon>
    </lineage>
</organism>
<reference key="1">
    <citation type="journal article" date="2001" name="J. Cell Sci.">
        <title>CrkRS: a novel conserved Cdc2-related protein kinase that colocalises with SC35 speckles.</title>
        <authorList>
            <person name="Ko T.K."/>
            <person name="Kelly E."/>
            <person name="Pines J."/>
        </authorList>
    </citation>
    <scope>NUCLEOTIDE SEQUENCE [MRNA] (ISOFORM 1)</scope>
    <scope>TISSUE SPECIFICITY</scope>
    <scope>SUBCELLULAR LOCATION</scope>
    <scope>FUNCTION</scope>
</reference>
<reference key="2">
    <citation type="journal article" date="1998" name="DNA Res.">
        <title>Prediction of the coding sequences of unidentified human genes. XII. The complete sequences of 100 new cDNA clones from brain which code for large proteins in vitro.</title>
        <authorList>
            <person name="Nagase T."/>
            <person name="Ishikawa K."/>
            <person name="Suyama M."/>
            <person name="Kikuno R."/>
            <person name="Hirosawa M."/>
            <person name="Miyajima N."/>
            <person name="Tanaka A."/>
            <person name="Kotani H."/>
            <person name="Nomura N."/>
            <person name="Ohara O."/>
        </authorList>
    </citation>
    <scope>NUCLEOTIDE SEQUENCE [LARGE SCALE MRNA] (ISOFORM 2)</scope>
    <source>
        <tissue>Brain</tissue>
    </source>
</reference>
<reference key="3">
    <citation type="journal article" date="2002" name="DNA Res.">
        <title>Construction of expression-ready cDNA clones for KIAA genes: manual curation of 330 KIAA cDNA clones.</title>
        <authorList>
            <person name="Nakajima D."/>
            <person name="Okazaki N."/>
            <person name="Yamakawa H."/>
            <person name="Kikuno R."/>
            <person name="Ohara O."/>
            <person name="Nagase T."/>
        </authorList>
    </citation>
    <scope>SEQUENCE REVISION</scope>
</reference>
<reference key="4">
    <citation type="journal article" date="2004" name="Nat. Genet.">
        <title>Complete sequencing and characterization of 21,243 full-length human cDNAs.</title>
        <authorList>
            <person name="Ota T."/>
            <person name="Suzuki Y."/>
            <person name="Nishikawa T."/>
            <person name="Otsuki T."/>
            <person name="Sugiyama T."/>
            <person name="Irie R."/>
            <person name="Wakamatsu A."/>
            <person name="Hayashi K."/>
            <person name="Sato H."/>
            <person name="Nagai K."/>
            <person name="Kimura K."/>
            <person name="Makita H."/>
            <person name="Sekine M."/>
            <person name="Obayashi M."/>
            <person name="Nishi T."/>
            <person name="Shibahara T."/>
            <person name="Tanaka T."/>
            <person name="Ishii S."/>
            <person name="Yamamoto J."/>
            <person name="Saito K."/>
            <person name="Kawai Y."/>
            <person name="Isono Y."/>
            <person name="Nakamura Y."/>
            <person name="Nagahari K."/>
            <person name="Murakami K."/>
            <person name="Yasuda T."/>
            <person name="Iwayanagi T."/>
            <person name="Wagatsuma M."/>
            <person name="Shiratori A."/>
            <person name="Sudo H."/>
            <person name="Hosoiri T."/>
            <person name="Kaku Y."/>
            <person name="Kodaira H."/>
            <person name="Kondo H."/>
            <person name="Sugawara M."/>
            <person name="Takahashi M."/>
            <person name="Kanda K."/>
            <person name="Yokoi T."/>
            <person name="Furuya T."/>
            <person name="Kikkawa E."/>
            <person name="Omura Y."/>
            <person name="Abe K."/>
            <person name="Kamihara K."/>
            <person name="Katsuta N."/>
            <person name="Sato K."/>
            <person name="Tanikawa M."/>
            <person name="Yamazaki M."/>
            <person name="Ninomiya K."/>
            <person name="Ishibashi T."/>
            <person name="Yamashita H."/>
            <person name="Murakawa K."/>
            <person name="Fujimori K."/>
            <person name="Tanai H."/>
            <person name="Kimata M."/>
            <person name="Watanabe M."/>
            <person name="Hiraoka S."/>
            <person name="Chiba Y."/>
            <person name="Ishida S."/>
            <person name="Ono Y."/>
            <person name="Takiguchi S."/>
            <person name="Watanabe S."/>
            <person name="Yosida M."/>
            <person name="Hotuta T."/>
            <person name="Kusano J."/>
            <person name="Kanehori K."/>
            <person name="Takahashi-Fujii A."/>
            <person name="Hara H."/>
            <person name="Tanase T.-O."/>
            <person name="Nomura Y."/>
            <person name="Togiya S."/>
            <person name="Komai F."/>
            <person name="Hara R."/>
            <person name="Takeuchi K."/>
            <person name="Arita M."/>
            <person name="Imose N."/>
            <person name="Musashino K."/>
            <person name="Yuuki H."/>
            <person name="Oshima A."/>
            <person name="Sasaki N."/>
            <person name="Aotsuka S."/>
            <person name="Yoshikawa Y."/>
            <person name="Matsunawa H."/>
            <person name="Ichihara T."/>
            <person name="Shiohata N."/>
            <person name="Sano S."/>
            <person name="Moriya S."/>
            <person name="Momiyama H."/>
            <person name="Satoh N."/>
            <person name="Takami S."/>
            <person name="Terashima Y."/>
            <person name="Suzuki O."/>
            <person name="Nakagawa S."/>
            <person name="Senoh A."/>
            <person name="Mizoguchi H."/>
            <person name="Goto Y."/>
            <person name="Shimizu F."/>
            <person name="Wakebe H."/>
            <person name="Hishigaki H."/>
            <person name="Watanabe T."/>
            <person name="Sugiyama A."/>
            <person name="Takemoto M."/>
            <person name="Kawakami B."/>
            <person name="Yamazaki M."/>
            <person name="Watanabe K."/>
            <person name="Kumagai A."/>
            <person name="Itakura S."/>
            <person name="Fukuzumi Y."/>
            <person name="Fujimori Y."/>
            <person name="Komiyama M."/>
            <person name="Tashiro H."/>
            <person name="Tanigami A."/>
            <person name="Fujiwara T."/>
            <person name="Ono T."/>
            <person name="Yamada K."/>
            <person name="Fujii Y."/>
            <person name="Ozaki K."/>
            <person name="Hirao M."/>
            <person name="Ohmori Y."/>
            <person name="Kawabata A."/>
            <person name="Hikiji T."/>
            <person name="Kobatake N."/>
            <person name="Inagaki H."/>
            <person name="Ikema Y."/>
            <person name="Okamoto S."/>
            <person name="Okitani R."/>
            <person name="Kawakami T."/>
            <person name="Noguchi S."/>
            <person name="Itoh T."/>
            <person name="Shigeta K."/>
            <person name="Senba T."/>
            <person name="Matsumura K."/>
            <person name="Nakajima Y."/>
            <person name="Mizuno T."/>
            <person name="Morinaga M."/>
            <person name="Sasaki M."/>
            <person name="Togashi T."/>
            <person name="Oyama M."/>
            <person name="Hata H."/>
            <person name="Watanabe M."/>
            <person name="Komatsu T."/>
            <person name="Mizushima-Sugano J."/>
            <person name="Satoh T."/>
            <person name="Shirai Y."/>
            <person name="Takahashi Y."/>
            <person name="Nakagawa K."/>
            <person name="Okumura K."/>
            <person name="Nagase T."/>
            <person name="Nomura N."/>
            <person name="Kikuchi H."/>
            <person name="Masuho Y."/>
            <person name="Yamashita R."/>
            <person name="Nakai K."/>
            <person name="Yada T."/>
            <person name="Nakamura Y."/>
            <person name="Ohara O."/>
            <person name="Isogai T."/>
            <person name="Sugano S."/>
        </authorList>
    </citation>
    <scope>NUCLEOTIDE SEQUENCE [LARGE SCALE MRNA] (ISOFORM 3)</scope>
    <source>
        <tissue>Testis</tissue>
    </source>
</reference>
<reference key="5">
    <citation type="journal article" date="2006" name="Nature">
        <title>DNA sequence of human chromosome 17 and analysis of rearrangement in the human lineage.</title>
        <authorList>
            <person name="Zody M.C."/>
            <person name="Garber M."/>
            <person name="Adams D.J."/>
            <person name="Sharpe T."/>
            <person name="Harrow J."/>
            <person name="Lupski J.R."/>
            <person name="Nicholson C."/>
            <person name="Searle S.M."/>
            <person name="Wilming L."/>
            <person name="Young S.K."/>
            <person name="Abouelleil A."/>
            <person name="Allen N.R."/>
            <person name="Bi W."/>
            <person name="Bloom T."/>
            <person name="Borowsky M.L."/>
            <person name="Bugalter B.E."/>
            <person name="Butler J."/>
            <person name="Chang J.L."/>
            <person name="Chen C.-K."/>
            <person name="Cook A."/>
            <person name="Corum B."/>
            <person name="Cuomo C.A."/>
            <person name="de Jong P.J."/>
            <person name="DeCaprio D."/>
            <person name="Dewar K."/>
            <person name="FitzGerald M."/>
            <person name="Gilbert J."/>
            <person name="Gibson R."/>
            <person name="Gnerre S."/>
            <person name="Goldstein S."/>
            <person name="Grafham D.V."/>
            <person name="Grocock R."/>
            <person name="Hafez N."/>
            <person name="Hagopian D.S."/>
            <person name="Hart E."/>
            <person name="Norman C.H."/>
            <person name="Humphray S."/>
            <person name="Jaffe D.B."/>
            <person name="Jones M."/>
            <person name="Kamal M."/>
            <person name="Khodiyar V.K."/>
            <person name="LaButti K."/>
            <person name="Laird G."/>
            <person name="Lehoczky J."/>
            <person name="Liu X."/>
            <person name="Lokyitsang T."/>
            <person name="Loveland J."/>
            <person name="Lui A."/>
            <person name="Macdonald P."/>
            <person name="Major J.E."/>
            <person name="Matthews L."/>
            <person name="Mauceli E."/>
            <person name="McCarroll S.A."/>
            <person name="Mihalev A.H."/>
            <person name="Mudge J."/>
            <person name="Nguyen C."/>
            <person name="Nicol R."/>
            <person name="O'Leary S.B."/>
            <person name="Osoegawa K."/>
            <person name="Schwartz D.C."/>
            <person name="Shaw-Smith C."/>
            <person name="Stankiewicz P."/>
            <person name="Steward C."/>
            <person name="Swarbreck D."/>
            <person name="Venkataraman V."/>
            <person name="Whittaker C.A."/>
            <person name="Yang X."/>
            <person name="Zimmer A.R."/>
            <person name="Bradley A."/>
            <person name="Hubbard T."/>
            <person name="Birren B.W."/>
            <person name="Rogers J."/>
            <person name="Lander E.S."/>
            <person name="Nusbaum C."/>
        </authorList>
    </citation>
    <scope>NUCLEOTIDE SEQUENCE [LARGE SCALE GENOMIC DNA]</scope>
</reference>
<reference key="6">
    <citation type="submission" date="2005-07" db="EMBL/GenBank/DDBJ databases">
        <authorList>
            <person name="Mural R.J."/>
            <person name="Istrail S."/>
            <person name="Sutton G.G."/>
            <person name="Florea L."/>
            <person name="Halpern A.L."/>
            <person name="Mobarry C.M."/>
            <person name="Lippert R."/>
            <person name="Walenz B."/>
            <person name="Shatkay H."/>
            <person name="Dew I."/>
            <person name="Miller J.R."/>
            <person name="Flanigan M.J."/>
            <person name="Edwards N.J."/>
            <person name="Bolanos R."/>
            <person name="Fasulo D."/>
            <person name="Halldorsson B.V."/>
            <person name="Hannenhalli S."/>
            <person name="Turner R."/>
            <person name="Yooseph S."/>
            <person name="Lu F."/>
            <person name="Nusskern D.R."/>
            <person name="Shue B.C."/>
            <person name="Zheng X.H."/>
            <person name="Zhong F."/>
            <person name="Delcher A.L."/>
            <person name="Huson D.H."/>
            <person name="Kravitz S.A."/>
            <person name="Mouchard L."/>
            <person name="Reinert K."/>
            <person name="Remington K.A."/>
            <person name="Clark A.G."/>
            <person name="Waterman M.S."/>
            <person name="Eichler E.E."/>
            <person name="Adams M.D."/>
            <person name="Hunkapiller M.W."/>
            <person name="Myers E.W."/>
            <person name="Venter J.C."/>
        </authorList>
    </citation>
    <scope>NUCLEOTIDE SEQUENCE [LARGE SCALE GENOMIC DNA]</scope>
</reference>
<reference key="7">
    <citation type="journal article" date="2004" name="Genome Res.">
        <title>The status, quality, and expansion of the NIH full-length cDNA project: the Mammalian Gene Collection (MGC).</title>
        <authorList>
            <consortium name="The MGC Project Team"/>
        </authorList>
    </citation>
    <scope>NUCLEOTIDE SEQUENCE [LARGE SCALE MRNA] (ISOFORM 2)</scope>
</reference>
<reference key="8">
    <citation type="journal article" date="2006" name="Cell">
        <title>Global, in vivo, and site-specific phosphorylation dynamics in signaling networks.</title>
        <authorList>
            <person name="Olsen J.V."/>
            <person name="Blagoev B."/>
            <person name="Gnad F."/>
            <person name="Macek B."/>
            <person name="Kumar C."/>
            <person name="Mortensen P."/>
            <person name="Mann M."/>
        </authorList>
    </citation>
    <scope>PHOSPHORYLATION [LARGE SCALE ANALYSIS] AT SER-681 AND SER-685</scope>
    <scope>IDENTIFICATION BY MASS SPECTROMETRY [LARGE SCALE ANALYSIS]</scope>
    <source>
        <tissue>Cervix carcinoma</tissue>
    </source>
</reference>
<reference key="9">
    <citation type="journal article" date="2006" name="Nat. Biotechnol.">
        <title>A probability-based approach for high-throughput protein phosphorylation analysis and site localization.</title>
        <authorList>
            <person name="Beausoleil S.A."/>
            <person name="Villen J."/>
            <person name="Gerber S.A."/>
            <person name="Rush J."/>
            <person name="Gygi S.P."/>
        </authorList>
    </citation>
    <scope>IDENTIFICATION BY MASS SPECTROMETRY [LARGE SCALE ANALYSIS]</scope>
    <source>
        <tissue>Cervix carcinoma</tissue>
    </source>
</reference>
<reference key="10">
    <citation type="journal article" date="2008" name="Mol. Cell">
        <title>Kinase-selective enrichment enables quantitative phosphoproteomics of the kinome across the cell cycle.</title>
        <authorList>
            <person name="Daub H."/>
            <person name="Olsen J.V."/>
            <person name="Bairlein M."/>
            <person name="Gnad F."/>
            <person name="Oppermann F.S."/>
            <person name="Korner R."/>
            <person name="Greff Z."/>
            <person name="Keri G."/>
            <person name="Stemmann O."/>
            <person name="Mann M."/>
        </authorList>
    </citation>
    <scope>PHOSPHORYLATION [LARGE SCALE ANALYSIS] AT THR-57; TYR-73; SER-400; SER-423; THR-514; SER-681; SER-685 AND THR-692</scope>
    <scope>IDENTIFICATION BY MASS SPECTROMETRY [LARGE SCALE ANALYSIS]</scope>
    <source>
        <tissue>Cervix carcinoma</tissue>
    </source>
</reference>
<reference key="11">
    <citation type="journal article" date="2008" name="Proc. Natl. Acad. Sci. U.S.A.">
        <title>A quantitative atlas of mitotic phosphorylation.</title>
        <authorList>
            <person name="Dephoure N."/>
            <person name="Zhou C."/>
            <person name="Villen J."/>
            <person name="Beausoleil S.A."/>
            <person name="Bakalarski C.E."/>
            <person name="Elledge S.J."/>
            <person name="Gygi S.P."/>
        </authorList>
    </citation>
    <scope>PHOSPHORYLATION [LARGE SCALE ANALYSIS] AT SER-249; SER-301; SER-303; SER-318; SER-323; SER-325; SER-332; SER-333; SER-334; SER-345; SER-383; SER-385; SER-400; SER-681; SER-685 AND THR-692</scope>
    <scope>IDENTIFICATION BY MASS SPECTROMETRY [LARGE SCALE ANALYSIS]</scope>
    <source>
        <tissue>Cervix carcinoma</tissue>
    </source>
</reference>
<reference key="12">
    <citation type="journal article" date="2009" name="Anal. Chem.">
        <title>Lys-N and trypsin cover complementary parts of the phosphoproteome in a refined SCX-based approach.</title>
        <authorList>
            <person name="Gauci S."/>
            <person name="Helbig A.O."/>
            <person name="Slijper M."/>
            <person name="Krijgsveld J."/>
            <person name="Heck A.J."/>
            <person name="Mohammed S."/>
        </authorList>
    </citation>
    <scope>IDENTIFICATION BY MASS SPECTROMETRY [LARGE SCALE ANALYSIS]</scope>
</reference>
<reference key="13">
    <citation type="journal article" date="2009" name="Carcinogenesis">
        <title>CRK7 modifies the MAPK pathway and influences the response to endocrine therapy.</title>
        <authorList>
            <person name="Iorns E."/>
            <person name="Martens-de Kemp S.R."/>
            <person name="Lord C.J."/>
            <person name="Ashworth A."/>
        </authorList>
    </citation>
    <scope>FUNCTION</scope>
</reference>
<reference key="14">
    <citation type="journal article" date="2009" name="Mol. Cell. Proteomics">
        <title>Large-scale proteomics analysis of the human kinome.</title>
        <authorList>
            <person name="Oppermann F.S."/>
            <person name="Gnad F."/>
            <person name="Olsen J.V."/>
            <person name="Hornberger R."/>
            <person name="Greff Z."/>
            <person name="Keri G."/>
            <person name="Mann M."/>
            <person name="Daub H."/>
        </authorList>
    </citation>
    <scope>PHOSPHORYLATION [LARGE SCALE ANALYSIS] AT SER-420; SER-423; SER-681; SER-685; THR-692 AND SER-1053</scope>
    <scope>IDENTIFICATION BY MASS SPECTROMETRY [LARGE SCALE ANALYSIS]</scope>
</reference>
<reference key="15">
    <citation type="journal article" date="2009" name="Sci. Signal.">
        <title>Quantitative phosphoproteomic analysis of T cell receptor signaling reveals system-wide modulation of protein-protein interactions.</title>
        <authorList>
            <person name="Mayya V."/>
            <person name="Lundgren D.H."/>
            <person name="Hwang S.-I."/>
            <person name="Rezaul K."/>
            <person name="Wu L."/>
            <person name="Eng J.K."/>
            <person name="Rodionov V."/>
            <person name="Han D.K."/>
        </authorList>
    </citation>
    <scope>PHOSPHORYLATION [LARGE SCALE ANALYSIS] AT SER-236; SER-383; SER-385; SER-681; SER-685 AND THR-1244</scope>
    <scope>IDENTIFICATION BY MASS SPECTROMETRY [LARGE SCALE ANALYSIS]</scope>
    <source>
        <tissue>Leukemic T-cell</tissue>
    </source>
</reference>
<reference key="16">
    <citation type="journal article" date="2010" name="Genes Dev.">
        <title>CDK12 is a transcription elongation-associated CTD kinase, the metazoan ortholog of yeast Ctk1.</title>
        <authorList>
            <person name="Bartkowiak B."/>
            <person name="Liu P."/>
            <person name="Phatnani H.P."/>
            <person name="Fuda N.J."/>
            <person name="Cooper J.J."/>
            <person name="Price D.H."/>
            <person name="Adelman K."/>
            <person name="Lis J.T."/>
            <person name="Greenleaf A.L."/>
        </authorList>
    </citation>
    <scope>FUNCTION</scope>
    <scope>CATALYTIC ACTIVITY</scope>
</reference>
<reference key="17">
    <citation type="journal article" date="2010" name="Sci. Signal.">
        <title>Quantitative phosphoproteomics reveals widespread full phosphorylation site occupancy during mitosis.</title>
        <authorList>
            <person name="Olsen J.V."/>
            <person name="Vermeulen M."/>
            <person name="Santamaria A."/>
            <person name="Kumar C."/>
            <person name="Miller M.L."/>
            <person name="Jensen L.J."/>
            <person name="Gnad F."/>
            <person name="Cox J."/>
            <person name="Jensen T.S."/>
            <person name="Nigg E.A."/>
            <person name="Brunak S."/>
            <person name="Mann M."/>
        </authorList>
    </citation>
    <scope>PHOSPHORYLATION [LARGE SCALE ANALYSIS] AT SER-236; SER-249; SER-385; SER-400; SER-423; SER-681; SER-685; THR-893 AND SER-1083</scope>
    <scope>IDENTIFICATION BY MASS SPECTROMETRY [LARGE SCALE ANALYSIS]</scope>
    <source>
        <tissue>Cervix carcinoma</tissue>
    </source>
</reference>
<reference key="18">
    <citation type="journal article" date="2011" name="BMC Syst. Biol.">
        <title>Initial characterization of the human central proteome.</title>
        <authorList>
            <person name="Burkard T.R."/>
            <person name="Planyavsky M."/>
            <person name="Kaupe I."/>
            <person name="Breitwieser F.P."/>
            <person name="Buerckstuemmer T."/>
            <person name="Bennett K.L."/>
            <person name="Superti-Furga G."/>
            <person name="Colinge J."/>
        </authorList>
    </citation>
    <scope>IDENTIFICATION BY MASS SPECTROMETRY [LARGE SCALE ANALYSIS]</scope>
</reference>
<reference key="19">
    <citation type="journal article" date="2011" name="Cancer Res.">
        <title>Genetic and structural variation in the gastric cancer kinome revealed through targeted deep sequencing.</title>
        <authorList>
            <person name="Zang Z.J."/>
            <person name="Ong C.K."/>
            <person name="Cutcutache I."/>
            <person name="Yu W."/>
            <person name="Zhang S.L."/>
            <person name="Huang D."/>
            <person name="Ler L.D."/>
            <person name="Dykema K."/>
            <person name="Gan A."/>
            <person name="Tao J."/>
            <person name="Lim S."/>
            <person name="Liu Y."/>
            <person name="Futreal P.A."/>
            <person name="Grabsch H."/>
            <person name="Furge K.A."/>
            <person name="Goh L.K."/>
            <person name="Rozen S."/>
            <person name="Teh B.T."/>
            <person name="Tan P."/>
        </authorList>
    </citation>
    <scope>CHROMOSOMAL REARRANGEMENT WITH ERBB2</scope>
    <scope>POSSIBLE INVOLVEMENT IN GASTRIC CANCER</scope>
</reference>
<reference key="20">
    <citation type="journal article" date="2011" name="Genes Dev.">
        <title>The Cyclin K/Cdk12 complex maintains genomic stability via regulation of expression of DNA damage response genes.</title>
        <authorList>
            <person name="Blazek D."/>
            <person name="Kohoutek J."/>
            <person name="Bartholomeeusen K."/>
            <person name="Johansen E."/>
            <person name="Hulinkova P."/>
            <person name="Luo Z."/>
            <person name="Cimermancic P."/>
            <person name="Ule J."/>
            <person name="Peterlin B.M."/>
        </authorList>
    </citation>
    <scope>FUNCTION</scope>
    <scope>SUBUNIT</scope>
    <scope>SUBCELLULAR LOCATION</scope>
</reference>
<reference key="21">
    <citation type="journal article" date="2011" name="Sci. Signal.">
        <title>System-wide temporal characterization of the proteome and phosphoproteome of human embryonic stem cell differentiation.</title>
        <authorList>
            <person name="Rigbolt K.T."/>
            <person name="Prokhorova T.A."/>
            <person name="Akimov V."/>
            <person name="Henningsen J."/>
            <person name="Johansen P.T."/>
            <person name="Kratchmarova I."/>
            <person name="Kassem M."/>
            <person name="Mann M."/>
            <person name="Olsen J.V."/>
            <person name="Blagoev B."/>
        </authorList>
    </citation>
    <scope>PHOSPHORYLATION [LARGE SCALE ANALYSIS] AT SER-236; SER-249; SER-274; SER-276; SER-301; SER-303; SER-310; SER-312; SER-332; SER-333; SER-334; SER-338; SER-423; SER-681; SER-685; THR-893 AND SER-1083</scope>
    <scope>IDENTIFICATION BY MASS SPECTROMETRY [LARGE SCALE ANALYSIS]</scope>
</reference>
<reference key="22">
    <citation type="journal article" date="2013" name="J. Proteome Res.">
        <title>Toward a comprehensive characterization of a human cancer cell phosphoproteome.</title>
        <authorList>
            <person name="Zhou H."/>
            <person name="Di Palma S."/>
            <person name="Preisinger C."/>
            <person name="Peng M."/>
            <person name="Polat A.N."/>
            <person name="Heck A.J."/>
            <person name="Mohammed S."/>
        </authorList>
    </citation>
    <scope>PHOSPHORYLATION [LARGE SCALE ANALYSIS] AT SER-236; SER-249; SER-265; SER-274; SER-276; SER-318; SER-323; SER-325; SER-332; SER-333; SER-334; SER-341; SER-343; SER-345; SER-423; THR-514; SER-614; SER-681; THR-692; SER-889; THR-893; SER-1053 AND SER-1083</scope>
    <scope>IDENTIFICATION BY MASS SPECTROMETRY [LARGE SCALE ANALYSIS]</scope>
    <source>
        <tissue>Cervix carcinoma</tissue>
        <tissue>Erythroleukemia</tissue>
    </source>
</reference>
<reference key="23">
    <citation type="journal article" date="2014" name="J. Proteomics">
        <title>An enzyme assisted RP-RPLC approach for in-depth analysis of human liver phosphoproteome.</title>
        <authorList>
            <person name="Bian Y."/>
            <person name="Song C."/>
            <person name="Cheng K."/>
            <person name="Dong M."/>
            <person name="Wang F."/>
            <person name="Huang J."/>
            <person name="Sun D."/>
            <person name="Wang L."/>
            <person name="Ye M."/>
            <person name="Zou H."/>
        </authorList>
    </citation>
    <scope>PHOSPHORYLATION [LARGE SCALE ANALYSIS] AT SER-423; SER-681 AND SER-685</scope>
    <scope>IDENTIFICATION BY MASS SPECTROMETRY [LARGE SCALE ANALYSIS]</scope>
    <source>
        <tissue>Liver</tissue>
    </source>
</reference>
<reference key="24">
    <citation type="journal article" date="2017" name="Nat. Struct. Mol. Biol.">
        <title>Site-specific mapping of the human SUMO proteome reveals co-modification with phosphorylation.</title>
        <authorList>
            <person name="Hendriks I.A."/>
            <person name="Lyon D."/>
            <person name="Young C."/>
            <person name="Jensen L.J."/>
            <person name="Vertegaal A.C."/>
            <person name="Nielsen M.L."/>
        </authorList>
    </citation>
    <scope>SUMOYLATION [LARGE SCALE ANALYSIS] AT LYS-263; LYS-509 AND LYS-655</scope>
    <scope>IDENTIFICATION BY MASS SPECTROMETRY [LARGE SCALE ANALYSIS]</scope>
</reference>
<reference key="25">
    <citation type="journal article" date="2021" name="Vaccines (Basel)">
        <title>HSV-1 ICP22 Is a Selective Viral Repressor of Cellular RNA Polymerase II-Mediated Transcription Elongation.</title>
        <authorList>
            <person name="Isa N.F."/>
            <person name="Bensaude O."/>
            <person name="Aziz N.C."/>
            <person name="Murphy S."/>
        </authorList>
    </citation>
    <scope>INTERACTION WITH HHV-1 TRANSCRIPTIONAL REGULATOR ICP22 (MICROBIAL INFECTION)</scope>
</reference>
<reference key="26">
    <citation type="journal article" date="2014" name="Nat. Commun.">
        <title>The structure and substrate specificity of human Cdk12/Cyclin K.</title>
        <authorList>
            <person name="Boesken C.A."/>
            <person name="Farnung L."/>
            <person name="Hintermair C."/>
            <person name="Merzel Schachter M."/>
            <person name="Vogel-Bachmayr K."/>
            <person name="Blazek D."/>
            <person name="Anand K."/>
            <person name="Fisher R.P."/>
            <person name="Eick D."/>
            <person name="Geyer M."/>
        </authorList>
    </citation>
    <scope>X-RAY CRYSTALLOGRAPHY (2.20 ANGSTROMS) OF 714-1063 IN COMPLEX WITH THE ATP ANALOG ADP; TRANSITION STATE ANALOG AND CCNK</scope>
    <scope>FUNCTION</scope>
    <scope>CATALYTIC ACTIVITY</scope>
    <scope>SUBUNIT</scope>
    <scope>INTERACTION WITH CCNK</scope>
    <scope>PHOSPHORYLATION AT THR-893</scope>
    <scope>IDENTIFICATION BY MASS SPECTROMETRY</scope>
    <scope>MUTAGENESIS OF ASP-877</scope>
    <scope>ACTIVITY REGULATION</scope>
</reference>
<reference key="27">
    <citation type="journal article" date="2007" name="Nature">
        <title>Patterns of somatic mutation in human cancer genomes.</title>
        <authorList>
            <person name="Greenman C."/>
            <person name="Stephens P."/>
            <person name="Smith R."/>
            <person name="Dalgliesh G.L."/>
            <person name="Hunter C."/>
            <person name="Bignell G."/>
            <person name="Davies H."/>
            <person name="Teague J."/>
            <person name="Butler A."/>
            <person name="Stevens C."/>
            <person name="Edkins S."/>
            <person name="O'Meara S."/>
            <person name="Vastrik I."/>
            <person name="Schmidt E.E."/>
            <person name="Avis T."/>
            <person name="Barthorpe S."/>
            <person name="Bhamra G."/>
            <person name="Buck G."/>
            <person name="Choudhury B."/>
            <person name="Clements J."/>
            <person name="Cole J."/>
            <person name="Dicks E."/>
            <person name="Forbes S."/>
            <person name="Gray K."/>
            <person name="Halliday K."/>
            <person name="Harrison R."/>
            <person name="Hills K."/>
            <person name="Hinton J."/>
            <person name="Jenkinson A."/>
            <person name="Jones D."/>
            <person name="Menzies A."/>
            <person name="Mironenko T."/>
            <person name="Perry J."/>
            <person name="Raine K."/>
            <person name="Richardson D."/>
            <person name="Shepherd R."/>
            <person name="Small A."/>
            <person name="Tofts C."/>
            <person name="Varian J."/>
            <person name="Webb T."/>
            <person name="West S."/>
            <person name="Widaa S."/>
            <person name="Yates A."/>
            <person name="Cahill D.P."/>
            <person name="Louis D.N."/>
            <person name="Goldstraw P."/>
            <person name="Nicholson A.G."/>
            <person name="Brasseur F."/>
            <person name="Looijenga L."/>
            <person name="Weber B.L."/>
            <person name="Chiew Y.-E."/>
            <person name="DeFazio A."/>
            <person name="Greaves M.F."/>
            <person name="Green A.R."/>
            <person name="Campbell P."/>
            <person name="Birney E."/>
            <person name="Easton D.F."/>
            <person name="Chenevix-Trench G."/>
            <person name="Tan M.-H."/>
            <person name="Khoo S.K."/>
            <person name="Teh B.T."/>
            <person name="Yuen S.T."/>
            <person name="Leung S.Y."/>
            <person name="Wooster R."/>
            <person name="Futreal P.A."/>
            <person name="Stratton M.R."/>
        </authorList>
    </citation>
    <scope>VARIANTS [LARGE SCALE ANALYSIS] ALA-530; HIS-912; GLN-1189 AND LEU-1275</scope>
</reference>
<feature type="chain" id="PRO_0000085715" description="Cyclin-dependent kinase 12">
    <location>
        <begin position="1"/>
        <end position="1490"/>
    </location>
</feature>
<feature type="domain" description="Protein kinase" evidence="4">
    <location>
        <begin position="727"/>
        <end position="1020"/>
    </location>
</feature>
<feature type="region of interest" description="Disordered" evidence="6">
    <location>
        <begin position="1"/>
        <end position="703"/>
    </location>
</feature>
<feature type="region of interest" description="Disordered" evidence="6">
    <location>
        <begin position="1047"/>
        <end position="1098"/>
    </location>
</feature>
<feature type="region of interest" description="Disordered" evidence="6">
    <location>
        <begin position="1161"/>
        <end position="1189"/>
    </location>
</feature>
<feature type="region of interest" description="Disordered" evidence="6">
    <location>
        <begin position="1220"/>
        <end position="1348"/>
    </location>
</feature>
<feature type="region of interest" description="Disordered" evidence="6">
    <location>
        <begin position="1441"/>
        <end position="1460"/>
    </location>
</feature>
<feature type="region of interest" description="Disordered" evidence="6">
    <location>
        <begin position="1466"/>
        <end position="1490"/>
    </location>
</feature>
<feature type="compositionally biased region" description="Basic and acidic residues" evidence="6">
    <location>
        <begin position="1"/>
        <end position="13"/>
    </location>
</feature>
<feature type="compositionally biased region" description="Basic residues" evidence="6">
    <location>
        <begin position="34"/>
        <end position="49"/>
    </location>
</feature>
<feature type="compositionally biased region" description="Acidic residues" evidence="6">
    <location>
        <begin position="72"/>
        <end position="84"/>
    </location>
</feature>
<feature type="compositionally biased region" description="Basic and acidic residues" evidence="6">
    <location>
        <begin position="87"/>
        <end position="106"/>
    </location>
</feature>
<feature type="compositionally biased region" description="Basic residues" evidence="6">
    <location>
        <begin position="107"/>
        <end position="119"/>
    </location>
</feature>
<feature type="compositionally biased region" description="Basic and acidic residues" evidence="6">
    <location>
        <begin position="120"/>
        <end position="134"/>
    </location>
</feature>
<feature type="compositionally biased region" description="Basic and acidic residues" evidence="6">
    <location>
        <begin position="142"/>
        <end position="162"/>
    </location>
</feature>
<feature type="compositionally biased region" description="Basic and acidic residues" evidence="6">
    <location>
        <begin position="184"/>
        <end position="195"/>
    </location>
</feature>
<feature type="compositionally biased region" description="Basic residues" evidence="6">
    <location>
        <begin position="196"/>
        <end position="205"/>
    </location>
</feature>
<feature type="compositionally biased region" description="Basic and acidic residues" evidence="6">
    <location>
        <begin position="226"/>
        <end position="235"/>
    </location>
</feature>
<feature type="compositionally biased region" description="Polar residues" evidence="6">
    <location>
        <begin position="250"/>
        <end position="276"/>
    </location>
</feature>
<feature type="compositionally biased region" description="Low complexity" evidence="6">
    <location>
        <begin position="287"/>
        <end position="305"/>
    </location>
</feature>
<feature type="compositionally biased region" description="Low complexity" evidence="6">
    <location>
        <begin position="313"/>
        <end position="350"/>
    </location>
</feature>
<feature type="compositionally biased region" description="Basic residues" evidence="6">
    <location>
        <begin position="366"/>
        <end position="381"/>
    </location>
</feature>
<feature type="compositionally biased region" description="Basic and acidic residues" evidence="6">
    <location>
        <begin position="428"/>
        <end position="458"/>
    </location>
</feature>
<feature type="compositionally biased region" description="Polar residues" evidence="6">
    <location>
        <begin position="466"/>
        <end position="478"/>
    </location>
</feature>
<feature type="compositionally biased region" description="Basic and acidic residues" evidence="6">
    <location>
        <begin position="479"/>
        <end position="525"/>
    </location>
</feature>
<feature type="compositionally biased region" description="Pro residues" evidence="6">
    <location>
        <begin position="526"/>
        <end position="570"/>
    </location>
</feature>
<feature type="compositionally biased region" description="Low complexity" evidence="6">
    <location>
        <begin position="577"/>
        <end position="593"/>
    </location>
</feature>
<feature type="compositionally biased region" description="Low complexity" evidence="6">
    <location>
        <begin position="601"/>
        <end position="616"/>
    </location>
</feature>
<feature type="compositionally biased region" description="Basic and acidic residues" evidence="6">
    <location>
        <begin position="654"/>
        <end position="666"/>
    </location>
</feature>
<feature type="compositionally biased region" description="Polar residues" evidence="6">
    <location>
        <begin position="1071"/>
        <end position="1083"/>
    </location>
</feature>
<feature type="compositionally biased region" description="Polar residues" evidence="6">
    <location>
        <begin position="1161"/>
        <end position="1171"/>
    </location>
</feature>
<feature type="compositionally biased region" description="Pro residues" evidence="6">
    <location>
        <begin position="1268"/>
        <end position="1281"/>
    </location>
</feature>
<feature type="compositionally biased region" description="Low complexity" evidence="6">
    <location>
        <begin position="1473"/>
        <end position="1490"/>
    </location>
</feature>
<feature type="active site" description="Proton acceptor" evidence="4 5">
    <location>
        <position position="859"/>
    </location>
</feature>
<feature type="binding site">
    <location>
        <begin position="733"/>
        <end position="741"/>
    </location>
    <ligand>
        <name>ATP</name>
        <dbReference type="ChEBI" id="CHEBI:30616"/>
    </ligand>
</feature>
<feature type="binding site">
    <location>
        <position position="756"/>
    </location>
    <ligand>
        <name>ATP</name>
        <dbReference type="ChEBI" id="CHEBI:30616"/>
    </ligand>
</feature>
<feature type="binding site">
    <location>
        <begin position="814"/>
        <end position="819"/>
    </location>
    <ligand>
        <name>ATP</name>
        <dbReference type="ChEBI" id="CHEBI:30616"/>
    </ligand>
</feature>
<feature type="binding site">
    <location>
        <position position="1040"/>
    </location>
    <ligand>
        <name>ATP</name>
        <dbReference type="ChEBI" id="CHEBI:30616"/>
    </ligand>
</feature>
<feature type="modified residue" description="Phosphothreonine" evidence="21">
    <location>
        <position position="57"/>
    </location>
</feature>
<feature type="modified residue" description="Phosphotyrosine" evidence="21">
    <location>
        <position position="73"/>
    </location>
</feature>
<feature type="modified residue" description="Phosphoserine" evidence="23 24 25 26">
    <location>
        <position position="236"/>
    </location>
</feature>
<feature type="modified residue" description="Phosphoserine" evidence="20 24 25 26">
    <location>
        <position position="249"/>
    </location>
</feature>
<feature type="modified residue" description="Phosphoserine" evidence="26">
    <location>
        <position position="265"/>
    </location>
</feature>
<feature type="modified residue" description="Phosphoserine" evidence="25 26">
    <location>
        <position position="274"/>
    </location>
</feature>
<feature type="modified residue" description="Phosphoserine" evidence="25 26">
    <location>
        <position position="276"/>
    </location>
</feature>
<feature type="modified residue" description="Phosphoserine" evidence="20 25">
    <location>
        <position position="301"/>
    </location>
</feature>
<feature type="modified residue" description="Phosphoserine" evidence="20 25">
    <location>
        <position position="303"/>
    </location>
</feature>
<feature type="modified residue" description="Phosphoserine" evidence="25">
    <location>
        <position position="310"/>
    </location>
</feature>
<feature type="modified residue" description="Phosphoserine" evidence="25">
    <location>
        <position position="312"/>
    </location>
</feature>
<feature type="modified residue" description="Phosphoserine" evidence="20 26">
    <location>
        <position position="318"/>
    </location>
</feature>
<feature type="modified residue" description="Phosphoserine" evidence="20 26">
    <location>
        <position position="323"/>
    </location>
</feature>
<feature type="modified residue" description="Phosphoserine" evidence="20 26">
    <location>
        <position position="325"/>
    </location>
</feature>
<feature type="modified residue" description="Phosphoserine" evidence="20 25 26">
    <location>
        <position position="332"/>
    </location>
</feature>
<feature type="modified residue" description="Phosphoserine" evidence="20 25 26">
    <location>
        <position position="333"/>
    </location>
</feature>
<feature type="modified residue" description="Phosphoserine" evidence="20 25 26">
    <location>
        <position position="334"/>
    </location>
</feature>
<feature type="modified residue" description="Phosphoserine" evidence="25">
    <location>
        <position position="338"/>
    </location>
</feature>
<feature type="modified residue" description="Phosphoserine" evidence="26">
    <location>
        <position position="341"/>
    </location>
</feature>
<feature type="modified residue" description="Phosphoserine" evidence="26">
    <location>
        <position position="343"/>
    </location>
</feature>
<feature type="modified residue" description="Phosphoserine" evidence="20 26">
    <location>
        <position position="345"/>
    </location>
</feature>
<feature type="modified residue" description="Phosphoserine" evidence="20 23">
    <location>
        <position position="383"/>
    </location>
</feature>
<feature type="modified residue" description="Phosphoserine" evidence="20 23 24">
    <location>
        <position position="385"/>
    </location>
</feature>
<feature type="modified residue" description="Phosphoserine" evidence="20 21 24">
    <location>
        <position position="400"/>
    </location>
</feature>
<feature type="modified residue" description="Phosphoserine" evidence="22">
    <location>
        <position position="420"/>
    </location>
</feature>
<feature type="modified residue" description="Phosphoserine" evidence="21 22 24 25 26 27">
    <location>
        <position position="423"/>
    </location>
</feature>
<feature type="modified residue" description="Phosphothreonine" evidence="21 26">
    <location>
        <position position="514"/>
    </location>
</feature>
<feature type="modified residue" description="Phosphoserine" evidence="26">
    <location>
        <position position="614"/>
    </location>
</feature>
<feature type="modified residue" description="Phosphoserine" evidence="3">
    <location>
        <position position="644"/>
    </location>
</feature>
<feature type="modified residue" description="Phosphoserine" evidence="19 20 21 22 23 24 25 26 27">
    <location>
        <position position="681"/>
    </location>
</feature>
<feature type="modified residue" description="Phosphoserine" evidence="19 20 21 22 23 24 25 27">
    <location>
        <position position="685"/>
    </location>
</feature>
<feature type="modified residue" description="Phosphothreonine" evidence="20 21 22 26">
    <location>
        <position position="692"/>
    </location>
</feature>
<feature type="modified residue" description="Phosphoserine" evidence="26">
    <location>
        <position position="889"/>
    </location>
</feature>
<feature type="modified residue" description="Phosphothreonine" evidence="12 24 25 26">
    <location>
        <position position="893"/>
    </location>
</feature>
<feature type="modified residue" description="Phosphoserine" evidence="22 26">
    <location>
        <position position="1053"/>
    </location>
</feature>
<feature type="modified residue" description="Phosphoserine" evidence="24 25 26">
    <location>
        <position position="1083"/>
    </location>
</feature>
<feature type="modified residue" description="Phosphothreonine" evidence="23">
    <location>
        <position position="1244"/>
    </location>
</feature>
<feature type="modified residue" description="Phosphothreonine" evidence="2">
    <location>
        <position position="1246"/>
    </location>
</feature>
<feature type="cross-link" description="Glycyl lysine isopeptide (Lys-Gly) (interchain with G-Cter in SUMO2)" evidence="28">
    <location>
        <position position="263"/>
    </location>
</feature>
<feature type="cross-link" description="Glycyl lysine isopeptide (Lys-Gly) (interchain with G-Cter in SUMO2)" evidence="28">
    <location>
        <position position="509"/>
    </location>
</feature>
<feature type="cross-link" description="Glycyl lysine isopeptide (Lys-Gly) (interchain with G-Cter in SUMO2)" evidence="28">
    <location>
        <position position="655"/>
    </location>
</feature>
<feature type="splice variant" id="VSP_040908" description="In isoform 3." evidence="15">
    <location>
        <position position="349"/>
    </location>
</feature>
<feature type="splice variant" id="VSP_040909" description="In isoform 3." evidence="15">
    <original>DMQNILAVLLSQLMKTQEPAGSLEENNSDKNSGPQGPRRTPTMPQEEAAACPPHILPPEKRPPEPPGPPP</original>
    <variation>ILWYMQRPNCKTMGSWGQEPLGPAAQEQAFTGGAQLSLLLMENSIGGLQESHQEGEEGEEFLTNPETSVS</variation>
    <location>
        <begin position="1205"/>
        <end position="1274"/>
    </location>
</feature>
<feature type="splice variant" id="VSP_030284" description="In isoform 2." evidence="14 16">
    <location>
        <begin position="1254"/>
        <end position="1262"/>
    </location>
</feature>
<feature type="splice variant" id="VSP_040910" description="In isoform 3." evidence="15">
    <location>
        <begin position="1275"/>
        <end position="1490"/>
    </location>
</feature>
<feature type="sequence variant" id="VAR_041968" description="In dbSNP:rs56121596." evidence="8">
    <original>P</original>
    <variation>A</variation>
    <location>
        <position position="530"/>
    </location>
</feature>
<feature type="sequence variant" id="VAR_041969" description="In a colorectal adenocarcinoma sample; somatic mutation." evidence="8">
    <original>R</original>
    <variation>H</variation>
    <location>
        <position position="912"/>
    </location>
</feature>
<feature type="sequence variant" id="VAR_041970" description="In dbSNP:rs56362165." evidence="8">
    <original>L</original>
    <variation>Q</variation>
    <location>
        <position position="1189"/>
    </location>
</feature>
<feature type="sequence variant" id="VAR_041971" description="In dbSNP:rs34070318." evidence="8">
    <original>P</original>
    <variation>L</variation>
    <location>
        <position position="1275"/>
    </location>
</feature>
<feature type="mutagenesis site" description="Abolishes kinase activity." evidence="12">
    <original>D</original>
    <variation>N</variation>
    <location>
        <position position="877"/>
    </location>
</feature>
<feature type="sequence conflict" description="In Ref. 4; BAG63886." evidence="17" ref="4">
    <original>S</original>
    <variation>G</variation>
    <location>
        <position position="133"/>
    </location>
</feature>
<feature type="sequence conflict" description="In Ref. 4; BAG63886." evidence="17" ref="4">
    <original>S</original>
    <variation>G</variation>
    <location>
        <position position="268"/>
    </location>
</feature>
<feature type="sequence conflict" description="In Ref. 1; AAF36401." evidence="17" ref="1">
    <original>D</original>
    <variation>G</variation>
    <location>
        <position position="639"/>
    </location>
</feature>
<feature type="sequence conflict" description="In Ref. 4; BAG63886." evidence="17" ref="4">
    <original>T</original>
    <variation>I</variation>
    <location>
        <position position="737"/>
    </location>
</feature>
<feature type="sequence conflict" description="In Ref. 1; AAF36401." evidence="17" ref="1">
    <original>K</original>
    <variation>R</variation>
    <location>
        <position position="745"/>
    </location>
</feature>
<feature type="sequence conflict" description="In Ref. 4; BAG63886." evidence="17" ref="4">
    <original>G</original>
    <variation>V</variation>
    <location>
        <position position="822"/>
    </location>
</feature>
<feature type="sequence conflict" description="In Ref. 1; AAF36401, 2; BAA74927 and 6; AAI50266." evidence="17" ref="1 2 6">
    <original>T</original>
    <variation>M</variation>
    <location>
        <position position="1195"/>
    </location>
</feature>
<feature type="strand" evidence="30">
    <location>
        <begin position="715"/>
        <end position="717"/>
    </location>
</feature>
<feature type="turn" evidence="35">
    <location>
        <begin position="719"/>
        <end position="721"/>
    </location>
</feature>
<feature type="helix" evidence="29">
    <location>
        <begin position="724"/>
        <end position="726"/>
    </location>
</feature>
<feature type="strand" evidence="29">
    <location>
        <begin position="727"/>
        <end position="735"/>
    </location>
</feature>
<feature type="strand" evidence="29">
    <location>
        <begin position="737"/>
        <end position="746"/>
    </location>
</feature>
<feature type="turn" evidence="29">
    <location>
        <begin position="747"/>
        <end position="749"/>
    </location>
</feature>
<feature type="strand" evidence="29">
    <location>
        <begin position="752"/>
        <end position="758"/>
    </location>
</feature>
<feature type="strand" evidence="35">
    <location>
        <begin position="762"/>
        <end position="767"/>
    </location>
</feature>
<feature type="helix" evidence="29">
    <location>
        <begin position="769"/>
        <end position="778"/>
    </location>
</feature>
<feature type="strand" evidence="29">
    <location>
        <begin position="789"/>
        <end position="794"/>
    </location>
</feature>
<feature type="turn" evidence="35">
    <location>
        <begin position="802"/>
        <end position="804"/>
    </location>
</feature>
<feature type="strand" evidence="29">
    <location>
        <begin position="809"/>
        <end position="814"/>
    </location>
</feature>
<feature type="strand" evidence="29">
    <location>
        <begin position="817"/>
        <end position="819"/>
    </location>
</feature>
<feature type="helix" evidence="29">
    <location>
        <begin position="820"/>
        <end position="826"/>
    </location>
</feature>
<feature type="helix" evidence="29">
    <location>
        <begin position="833"/>
        <end position="852"/>
    </location>
</feature>
<feature type="strand" evidence="34">
    <location>
        <begin position="855"/>
        <end position="857"/>
    </location>
</feature>
<feature type="helix" evidence="29">
    <location>
        <begin position="862"/>
        <end position="864"/>
    </location>
</feature>
<feature type="strand" evidence="29">
    <location>
        <begin position="865"/>
        <end position="867"/>
    </location>
</feature>
<feature type="strand" evidence="32">
    <location>
        <begin position="869"/>
        <end position="871"/>
    </location>
</feature>
<feature type="strand" evidence="29">
    <location>
        <begin position="873"/>
        <end position="875"/>
    </location>
</feature>
<feature type="helix" evidence="31">
    <location>
        <begin position="878"/>
        <end position="880"/>
    </location>
</feature>
<feature type="strand" evidence="33">
    <location>
        <begin position="881"/>
        <end position="883"/>
    </location>
</feature>
<feature type="strand" evidence="29">
    <location>
        <begin position="886"/>
        <end position="888"/>
    </location>
</feature>
<feature type="helix" evidence="29">
    <location>
        <begin position="899"/>
        <end position="901"/>
    </location>
</feature>
<feature type="helix" evidence="29">
    <location>
        <begin position="904"/>
        <end position="907"/>
    </location>
</feature>
<feature type="helix" evidence="29">
    <location>
        <begin position="916"/>
        <end position="931"/>
    </location>
</feature>
<feature type="helix" evidence="29">
    <location>
        <begin position="941"/>
        <end position="952"/>
    </location>
</feature>
<feature type="turn" evidence="29">
    <location>
        <begin position="957"/>
        <end position="959"/>
    </location>
</feature>
<feature type="helix" evidence="29">
    <location>
        <begin position="961"/>
        <end position="965"/>
    </location>
</feature>
<feature type="turn" evidence="29">
    <location>
        <begin position="967"/>
        <end position="971"/>
    </location>
</feature>
<feature type="helix" evidence="29">
    <location>
        <begin position="982"/>
        <end position="985"/>
    </location>
</feature>
<feature type="turn" evidence="29">
    <location>
        <begin position="986"/>
        <end position="988"/>
    </location>
</feature>
<feature type="helix" evidence="29">
    <location>
        <begin position="991"/>
        <end position="1000"/>
    </location>
</feature>
<feature type="turn" evidence="29">
    <location>
        <begin position="1005"/>
        <end position="1007"/>
    </location>
</feature>
<feature type="helix" evidence="29">
    <location>
        <begin position="1011"/>
        <end position="1014"/>
    </location>
</feature>
<feature type="helix" evidence="29">
    <location>
        <begin position="1018"/>
        <end position="1021"/>
    </location>
</feature>
<feature type="helix" evidence="29">
    <location>
        <begin position="1025"/>
        <end position="1027"/>
    </location>
</feature>
<feature type="strand" evidence="29">
    <location>
        <begin position="1035"/>
        <end position="1037"/>
    </location>
</feature>
<feature type="helix" evidence="29">
    <location>
        <begin position="1041"/>
        <end position="1045"/>
    </location>
</feature>
<protein>
    <recommendedName>
        <fullName>Cyclin-dependent kinase 12</fullName>
        <ecNumber>2.7.11.22</ecNumber>
        <ecNumber evidence="18">2.7.11.23</ecNumber>
    </recommendedName>
    <alternativeName>
        <fullName>Cdc2-related kinase, arginine/serine-rich</fullName>
        <shortName>CrkRS</shortName>
    </alternativeName>
    <alternativeName>
        <fullName>Cell division cycle 2-related protein kinase 7</fullName>
        <shortName>CDC2-related protein kinase 7</shortName>
    </alternativeName>
    <alternativeName>
        <fullName>Cell division protein kinase 12</fullName>
        <shortName>hCDK12</shortName>
    </alternativeName>
</protein>
<accession>Q9NYV4</accession>
<accession>A7E2B2</accession>
<accession>B4DYX4</accession>
<accession>B9EIQ6</accession>
<accession>O94978</accession>
<comment type="function">
    <text evidence="7 9 10 11 12">Cyclin-dependent kinase that phosphorylates the C-terminal domain (CTD) of the large subunit of RNA polymerase II (POLR2A), thereby acting as a key regulator of transcription elongation. Regulates the expression of genes involved in DNA repair and is required for the maintenance of genomic stability. Preferentially phosphorylates 'Ser-5' in CTD repeats that are already phosphorylated at 'Ser-7', but can also phosphorylate 'Ser-2'. Required for RNA splicing, possibly by phosphorylating SRSF1/SF2. Involved in regulation of MAP kinase activity, possibly leading to affect the response to estrogen inhibitors.</text>
</comment>
<comment type="catalytic activity">
    <reaction evidence="18">
        <text>[DNA-directed RNA polymerase] + ATP = phospho-[DNA-directed RNA polymerase] + ADP + H(+)</text>
        <dbReference type="Rhea" id="RHEA:10216"/>
        <dbReference type="Rhea" id="RHEA-COMP:11321"/>
        <dbReference type="Rhea" id="RHEA-COMP:11322"/>
        <dbReference type="ChEBI" id="CHEBI:15378"/>
        <dbReference type="ChEBI" id="CHEBI:30616"/>
        <dbReference type="ChEBI" id="CHEBI:43176"/>
        <dbReference type="ChEBI" id="CHEBI:68546"/>
        <dbReference type="ChEBI" id="CHEBI:456216"/>
        <dbReference type="EC" id="2.7.11.23"/>
    </reaction>
</comment>
<comment type="catalytic activity">
    <reaction>
        <text>L-seryl-[protein] + ATP = O-phospho-L-seryl-[protein] + ADP + H(+)</text>
        <dbReference type="Rhea" id="RHEA:17989"/>
        <dbReference type="Rhea" id="RHEA-COMP:9863"/>
        <dbReference type="Rhea" id="RHEA-COMP:11604"/>
        <dbReference type="ChEBI" id="CHEBI:15378"/>
        <dbReference type="ChEBI" id="CHEBI:29999"/>
        <dbReference type="ChEBI" id="CHEBI:30616"/>
        <dbReference type="ChEBI" id="CHEBI:83421"/>
        <dbReference type="ChEBI" id="CHEBI:456216"/>
        <dbReference type="EC" id="2.7.11.22"/>
    </reaction>
</comment>
<comment type="catalytic activity">
    <reaction>
        <text>L-threonyl-[protein] + ATP = O-phospho-L-threonyl-[protein] + ADP + H(+)</text>
        <dbReference type="Rhea" id="RHEA:46608"/>
        <dbReference type="Rhea" id="RHEA-COMP:11060"/>
        <dbReference type="Rhea" id="RHEA-COMP:11605"/>
        <dbReference type="ChEBI" id="CHEBI:15378"/>
        <dbReference type="ChEBI" id="CHEBI:30013"/>
        <dbReference type="ChEBI" id="CHEBI:30616"/>
        <dbReference type="ChEBI" id="CHEBI:61977"/>
        <dbReference type="ChEBI" id="CHEBI:456216"/>
        <dbReference type="EC" id="2.7.11.22"/>
    </reaction>
</comment>
<comment type="activity regulation">
    <text evidence="12">Inhibited by the ATP analog flavopiridol, purvalanol A, purvalanol B, staurosporine and CR8.</text>
</comment>
<comment type="subunit">
    <text evidence="1 11 12">Interacts with CCNL1 and CCNL2 (By similarity). Interacts with CCNK.</text>
</comment>
<comment type="subunit">
    <text evidence="13">(Microbial infection) Interacts with human herpes virus 1 (HHV-1) transcriptional regulator ICP22.</text>
</comment>
<comment type="subcellular location">
    <subcellularLocation>
        <location evidence="7">Nucleus</location>
    </subcellularLocation>
    <subcellularLocation>
        <location evidence="7">Nucleus speckle</location>
    </subcellularLocation>
    <text evidence="7">Colocalized with nuclear speckles throughout interphase.</text>
</comment>
<comment type="alternative products">
    <event type="alternative splicing"/>
    <isoform>
        <id>Q9NYV4-1</id>
        <name>1</name>
        <sequence type="displayed"/>
    </isoform>
    <isoform>
        <id>Q9NYV4-2</id>
        <name>2</name>
        <sequence type="described" ref="VSP_030284"/>
    </isoform>
    <isoform>
        <id>Q9NYV4-3</id>
        <name>3</name>
        <sequence type="described" ref="VSP_040908 VSP_040909 VSP_040910"/>
    </isoform>
</comment>
<comment type="tissue specificity">
    <text evidence="7">Widely expressed.</text>
</comment>
<comment type="PTM">
    <text evidence="12">Phosphorylation at Thr-893 increases kinase activity.</text>
</comment>
<comment type="disease">
    <text>Chromosomal aberrations involving CDK12 may be a cause gastric cancer. Deletions within 17q12 region producing fusion transcripts with ERBB2, leading to CDK12-ERBB2 fusion leading to trunctated CDK12 protein not in-frame with ERBB2.</text>
</comment>
<comment type="similarity">
    <text evidence="17">Belongs to the protein kinase superfamily. CMGC Ser/Thr protein kinase family. CDC2/CDKX subfamily.</text>
</comment>
<comment type="sequence caution" evidence="17">
    <conflict type="erroneous initiation">
        <sequence resource="EMBL-CDS" id="BAA74927"/>
    </conflict>
    <text>Extended N-terminus.</text>
</comment>
<gene>
    <name type="primary">CDK12</name>
    <name type="synonym">CRK7</name>
    <name type="synonym">CRKRS</name>
    <name type="synonym">KIAA0904</name>
</gene>